<evidence type="ECO:0000255" key="1">
    <source>
        <dbReference type="HAMAP-Rule" id="MF_00028"/>
    </source>
</evidence>
<reference key="1">
    <citation type="submission" date="2009-06" db="EMBL/GenBank/DDBJ databases">
        <title>Complete sequence of chromosome of Geopacillus sp. WCH70.</title>
        <authorList>
            <consortium name="US DOE Joint Genome Institute"/>
            <person name="Lucas S."/>
            <person name="Copeland A."/>
            <person name="Lapidus A."/>
            <person name="Glavina del Rio T."/>
            <person name="Dalin E."/>
            <person name="Tice H."/>
            <person name="Bruce D."/>
            <person name="Goodwin L."/>
            <person name="Pitluck S."/>
            <person name="Chertkov O."/>
            <person name="Brettin T."/>
            <person name="Detter J.C."/>
            <person name="Han C."/>
            <person name="Larimer F."/>
            <person name="Land M."/>
            <person name="Hauser L."/>
            <person name="Kyrpides N."/>
            <person name="Mikhailova N."/>
            <person name="Brumm P."/>
            <person name="Mead D.A."/>
            <person name="Richardson P."/>
        </authorList>
    </citation>
    <scope>NUCLEOTIDE SEQUENCE [LARGE SCALE GENOMIC DNA]</scope>
    <source>
        <strain>WCH70</strain>
    </source>
</reference>
<protein>
    <recommendedName>
        <fullName evidence="1">Cobyric acid synthase</fullName>
    </recommendedName>
</protein>
<sequence length="503" mass="56403">MAKALPIMFQGTHSDAGKSIIATAFCRIFAKNGWKTAPFKSQNMSLNSYVTVDGKEIGRAQGIQAEAAGVVATTDMNPILIKPSREHESQIVVHGKPYKNMQAFAYRGEFFEKGLAIIHESLDVLMNEYDRLVIEGAGSPAEINLNDRELVNMRVARMANAPVVLIGDIERGGVFASLVGTLQLLDKEDRKRIIGVIINKFRGDLALLKPGLDWFEQYTGVPVLGVVPYLEDLHIDAEDSVSLEQMSTAVNPDKDIDIAVIRYPKISNFTDVDPFLTEPDCHVRFVATAAQLGQPDLLILPGSKNTIEDLLYMKKNGIAEQIAQLNKHHRVTIVGICGGYQMLGARIRDPFGVETPLREISGLNLLPIETTLERKKTTVLSEGILTFTGERFFVKGYEIHMGRSQPLDGNIPFIHVQGRAEGAKSKDERVIGTYFHDLFHNDAFREALLNKIRREKGLAPIYGRQSFRTIREQAFDRLADHVKRHVCIEEIEEKMYMFQRRDV</sequence>
<feature type="chain" id="PRO_1000201968" description="Cobyric acid synthase">
    <location>
        <begin position="1"/>
        <end position="503"/>
    </location>
</feature>
<feature type="domain" description="GATase cobBQ-type" evidence="1">
    <location>
        <begin position="255"/>
        <end position="444"/>
    </location>
</feature>
<feature type="active site" description="Nucleophile" evidence="1">
    <location>
        <position position="337"/>
    </location>
</feature>
<feature type="active site" evidence="1">
    <location>
        <position position="436"/>
    </location>
</feature>
<comment type="function">
    <text evidence="1">Catalyzes amidations at positions B, D, E, and G on adenosylcobyrinic A,C-diamide. NH(2) groups are provided by glutamine, and one molecule of ATP is hydrogenolyzed for each amidation.</text>
</comment>
<comment type="pathway">
    <text evidence="1">Cofactor biosynthesis; adenosylcobalamin biosynthesis.</text>
</comment>
<comment type="similarity">
    <text evidence="1">Belongs to the CobB/CobQ family. CobQ subfamily.</text>
</comment>
<keyword id="KW-0169">Cobalamin biosynthesis</keyword>
<keyword id="KW-0315">Glutamine amidotransferase</keyword>
<gene>
    <name evidence="1" type="primary">cobQ</name>
    <name type="ordered locus">GWCH70_1560</name>
</gene>
<dbReference type="EMBL" id="CP001638">
    <property type="protein sequence ID" value="ACS24358.1"/>
    <property type="molecule type" value="Genomic_DNA"/>
</dbReference>
<dbReference type="SMR" id="C5DAP4"/>
<dbReference type="STRING" id="471223.GWCH70_1560"/>
<dbReference type="KEGG" id="gwc:GWCH70_1560"/>
<dbReference type="eggNOG" id="COG1492">
    <property type="taxonomic scope" value="Bacteria"/>
</dbReference>
<dbReference type="HOGENOM" id="CLU_019250_2_2_9"/>
<dbReference type="OrthoDB" id="9808302at2"/>
<dbReference type="UniPathway" id="UPA00148"/>
<dbReference type="GO" id="GO:0015420">
    <property type="term" value="F:ABC-type vitamin B12 transporter activity"/>
    <property type="evidence" value="ECO:0007669"/>
    <property type="project" value="UniProtKB-UniRule"/>
</dbReference>
<dbReference type="GO" id="GO:0003824">
    <property type="term" value="F:catalytic activity"/>
    <property type="evidence" value="ECO:0007669"/>
    <property type="project" value="InterPro"/>
</dbReference>
<dbReference type="GO" id="GO:0009236">
    <property type="term" value="P:cobalamin biosynthetic process"/>
    <property type="evidence" value="ECO:0007669"/>
    <property type="project" value="UniProtKB-UniRule"/>
</dbReference>
<dbReference type="CDD" id="cd05389">
    <property type="entry name" value="CobQ_N"/>
    <property type="match status" value="1"/>
</dbReference>
<dbReference type="CDD" id="cd01750">
    <property type="entry name" value="GATase1_CobQ"/>
    <property type="match status" value="1"/>
</dbReference>
<dbReference type="Gene3D" id="3.40.50.880">
    <property type="match status" value="1"/>
</dbReference>
<dbReference type="Gene3D" id="3.40.50.300">
    <property type="entry name" value="P-loop containing nucleotide triphosphate hydrolases"/>
    <property type="match status" value="1"/>
</dbReference>
<dbReference type="HAMAP" id="MF_00028">
    <property type="entry name" value="CobQ"/>
    <property type="match status" value="1"/>
</dbReference>
<dbReference type="InterPro" id="IPR029062">
    <property type="entry name" value="Class_I_gatase-like"/>
</dbReference>
<dbReference type="InterPro" id="IPR002586">
    <property type="entry name" value="CobQ/CobB/MinD/ParA_Nub-bd_dom"/>
</dbReference>
<dbReference type="InterPro" id="IPR033949">
    <property type="entry name" value="CobQ_GATase1"/>
</dbReference>
<dbReference type="InterPro" id="IPR047045">
    <property type="entry name" value="CobQ_N"/>
</dbReference>
<dbReference type="InterPro" id="IPR004459">
    <property type="entry name" value="CobQ_synth"/>
</dbReference>
<dbReference type="InterPro" id="IPR011698">
    <property type="entry name" value="GATase_3"/>
</dbReference>
<dbReference type="InterPro" id="IPR027417">
    <property type="entry name" value="P-loop_NTPase"/>
</dbReference>
<dbReference type="NCBIfam" id="TIGR00313">
    <property type="entry name" value="cobQ"/>
    <property type="match status" value="1"/>
</dbReference>
<dbReference type="NCBIfam" id="NF001989">
    <property type="entry name" value="PRK00784.1"/>
    <property type="match status" value="1"/>
</dbReference>
<dbReference type="PANTHER" id="PTHR21343:SF1">
    <property type="entry name" value="COBYRIC ACID SYNTHASE"/>
    <property type="match status" value="1"/>
</dbReference>
<dbReference type="PANTHER" id="PTHR21343">
    <property type="entry name" value="DETHIOBIOTIN SYNTHETASE"/>
    <property type="match status" value="1"/>
</dbReference>
<dbReference type="Pfam" id="PF01656">
    <property type="entry name" value="CbiA"/>
    <property type="match status" value="1"/>
</dbReference>
<dbReference type="Pfam" id="PF07685">
    <property type="entry name" value="GATase_3"/>
    <property type="match status" value="1"/>
</dbReference>
<dbReference type="SUPFAM" id="SSF52317">
    <property type="entry name" value="Class I glutamine amidotransferase-like"/>
    <property type="match status" value="1"/>
</dbReference>
<dbReference type="SUPFAM" id="SSF52540">
    <property type="entry name" value="P-loop containing nucleoside triphosphate hydrolases"/>
    <property type="match status" value="1"/>
</dbReference>
<dbReference type="PROSITE" id="PS51274">
    <property type="entry name" value="GATASE_COBBQ"/>
    <property type="match status" value="1"/>
</dbReference>
<organism>
    <name type="scientific">Geobacillus sp. (strain WCH70)</name>
    <dbReference type="NCBI Taxonomy" id="471223"/>
    <lineage>
        <taxon>Bacteria</taxon>
        <taxon>Bacillati</taxon>
        <taxon>Bacillota</taxon>
        <taxon>Bacilli</taxon>
        <taxon>Bacillales</taxon>
        <taxon>Anoxybacillaceae</taxon>
        <taxon>Geobacillus</taxon>
    </lineage>
</organism>
<accession>C5DAP4</accession>
<proteinExistence type="inferred from homology"/>
<name>COBQ_GEOSW</name>